<sequence length="162" mass="18055">MATSKCYYPRPSHRFFTTDQHVTATSDFELDEWDLFNTGSDSSSSFSFSDLTITSGRTGTNRQIHGGSDSGKAASSLPVNVPDWSKILGDESRRQRKISNEEEVDGDEILCGEGTRRVPPHELLANRRMASFSVHEGAGRTLKGRDLSRVRNTIFKIRGIED</sequence>
<protein>
    <recommendedName>
        <fullName evidence="2">Protein S40-4</fullName>
        <shortName evidence="2">AtS40-4</shortName>
    </recommendedName>
</protein>
<dbReference type="EMBL" id="AC006283">
    <property type="protein sequence ID" value="AAD20686.1"/>
    <property type="molecule type" value="Genomic_DNA"/>
</dbReference>
<dbReference type="EMBL" id="CP002685">
    <property type="protein sequence ID" value="AEC08116.1"/>
    <property type="molecule type" value="Genomic_DNA"/>
</dbReference>
<dbReference type="EMBL" id="AY070388">
    <property type="protein sequence ID" value="AAL49884.1"/>
    <property type="molecule type" value="mRNA"/>
</dbReference>
<dbReference type="EMBL" id="AY122954">
    <property type="protein sequence ID" value="AAM67487.1"/>
    <property type="molecule type" value="mRNA"/>
</dbReference>
<dbReference type="PIR" id="D84684">
    <property type="entry name" value="D84684"/>
</dbReference>
<dbReference type="RefSeq" id="NP_180407.1">
    <property type="nucleotide sequence ID" value="NM_128400.4"/>
</dbReference>
<dbReference type="FunCoup" id="Q9SKN0">
    <property type="interactions" value="5"/>
</dbReference>
<dbReference type="STRING" id="3702.Q9SKN0"/>
<dbReference type="PaxDb" id="3702-AT2G28400.1"/>
<dbReference type="ProteomicsDB" id="185586"/>
<dbReference type="EnsemblPlants" id="AT2G28400.1">
    <property type="protein sequence ID" value="AT2G28400.1"/>
    <property type="gene ID" value="AT2G28400"/>
</dbReference>
<dbReference type="GeneID" id="817388"/>
<dbReference type="Gramene" id="AT2G28400.1">
    <property type="protein sequence ID" value="AT2G28400.1"/>
    <property type="gene ID" value="AT2G28400"/>
</dbReference>
<dbReference type="KEGG" id="ath:AT2G28400"/>
<dbReference type="Araport" id="AT2G28400"/>
<dbReference type="TAIR" id="AT2G28400"/>
<dbReference type="eggNOG" id="ENOG502RZ83">
    <property type="taxonomic scope" value="Eukaryota"/>
</dbReference>
<dbReference type="HOGENOM" id="CLU_088831_1_1_1"/>
<dbReference type="InParanoid" id="Q9SKN0"/>
<dbReference type="OMA" id="EWDLYNT"/>
<dbReference type="PRO" id="PR:Q9SKN0"/>
<dbReference type="Proteomes" id="UP000006548">
    <property type="component" value="Chromosome 2"/>
</dbReference>
<dbReference type="ExpressionAtlas" id="Q9SKN0">
    <property type="expression patterns" value="baseline and differential"/>
</dbReference>
<dbReference type="GO" id="GO:0005737">
    <property type="term" value="C:cytoplasm"/>
    <property type="evidence" value="ECO:0000314"/>
    <property type="project" value="UniProtKB"/>
</dbReference>
<dbReference type="GO" id="GO:0010150">
    <property type="term" value="P:leaf senescence"/>
    <property type="evidence" value="ECO:0000270"/>
    <property type="project" value="UniProtKB"/>
</dbReference>
<dbReference type="GO" id="GO:0009737">
    <property type="term" value="P:response to abscisic acid"/>
    <property type="evidence" value="ECO:0000270"/>
    <property type="project" value="UniProtKB"/>
</dbReference>
<dbReference type="GO" id="GO:0009646">
    <property type="term" value="P:response to absence of light"/>
    <property type="evidence" value="ECO:0000270"/>
    <property type="project" value="UniProtKB"/>
</dbReference>
<dbReference type="GO" id="GO:0009617">
    <property type="term" value="P:response to bacterium"/>
    <property type="evidence" value="ECO:0000270"/>
    <property type="project" value="UniProtKB"/>
</dbReference>
<dbReference type="GO" id="GO:0009753">
    <property type="term" value="P:response to jasmonic acid"/>
    <property type="evidence" value="ECO:0000270"/>
    <property type="project" value="UniProtKB"/>
</dbReference>
<dbReference type="GO" id="GO:0009751">
    <property type="term" value="P:response to salicylic acid"/>
    <property type="evidence" value="ECO:0000270"/>
    <property type="project" value="UniProtKB"/>
</dbReference>
<dbReference type="InterPro" id="IPR007608">
    <property type="entry name" value="Senescence_reg_S40"/>
</dbReference>
<dbReference type="PANTHER" id="PTHR46525">
    <property type="entry name" value="EMB|CAB72159.1"/>
    <property type="match status" value="1"/>
</dbReference>
<dbReference type="PANTHER" id="PTHR46525:SF7">
    <property type="entry name" value="PROTEIN S40-4"/>
    <property type="match status" value="1"/>
</dbReference>
<dbReference type="Pfam" id="PF04520">
    <property type="entry name" value="Senescence_reg"/>
    <property type="match status" value="1"/>
</dbReference>
<comment type="subcellular location">
    <subcellularLocation>
        <location evidence="1">Cytoplasm</location>
    </subcellularLocation>
</comment>
<comment type="developmental stage">
    <text evidence="1">Accumulates during senescence.</text>
</comment>
<comment type="induction">
    <text evidence="1">Induced by dark, abscisic acid (ABA) and salicylic acid (SA), and slightly by jasmonic acid (MeJA) (PubMed:20238146). Triggered by pathogen attack such as Pseudomonas syringae pv. Tomato DC3000 (PubMed:20238146).</text>
</comment>
<comment type="similarity">
    <text evidence="3">Belongs to the senescence regulator S40 family.</text>
</comment>
<keyword id="KW-0963">Cytoplasm</keyword>
<keyword id="KW-1185">Reference proteome</keyword>
<reference key="1">
    <citation type="journal article" date="1999" name="Nature">
        <title>Sequence and analysis of chromosome 2 of the plant Arabidopsis thaliana.</title>
        <authorList>
            <person name="Lin X."/>
            <person name="Kaul S."/>
            <person name="Rounsley S.D."/>
            <person name="Shea T.P."/>
            <person name="Benito M.-I."/>
            <person name="Town C.D."/>
            <person name="Fujii C.Y."/>
            <person name="Mason T.M."/>
            <person name="Bowman C.L."/>
            <person name="Barnstead M.E."/>
            <person name="Feldblyum T.V."/>
            <person name="Buell C.R."/>
            <person name="Ketchum K.A."/>
            <person name="Lee J.J."/>
            <person name="Ronning C.M."/>
            <person name="Koo H.L."/>
            <person name="Moffat K.S."/>
            <person name="Cronin L.A."/>
            <person name="Shen M."/>
            <person name="Pai G."/>
            <person name="Van Aken S."/>
            <person name="Umayam L."/>
            <person name="Tallon L.J."/>
            <person name="Gill J.E."/>
            <person name="Adams M.D."/>
            <person name="Carrera A.J."/>
            <person name="Creasy T.H."/>
            <person name="Goodman H.M."/>
            <person name="Somerville C.R."/>
            <person name="Copenhaver G.P."/>
            <person name="Preuss D."/>
            <person name="Nierman W.C."/>
            <person name="White O."/>
            <person name="Eisen J.A."/>
            <person name="Salzberg S.L."/>
            <person name="Fraser C.M."/>
            <person name="Venter J.C."/>
        </authorList>
    </citation>
    <scope>NUCLEOTIDE SEQUENCE [LARGE SCALE GENOMIC DNA]</scope>
    <source>
        <strain>cv. Columbia</strain>
    </source>
</reference>
<reference key="2">
    <citation type="journal article" date="2017" name="Plant J.">
        <title>Araport11: a complete reannotation of the Arabidopsis thaliana reference genome.</title>
        <authorList>
            <person name="Cheng C.Y."/>
            <person name="Krishnakumar V."/>
            <person name="Chan A.P."/>
            <person name="Thibaud-Nissen F."/>
            <person name="Schobel S."/>
            <person name="Town C.D."/>
        </authorList>
    </citation>
    <scope>GENOME REANNOTATION</scope>
    <source>
        <strain>cv. Columbia</strain>
    </source>
</reference>
<reference key="3">
    <citation type="journal article" date="2003" name="Science">
        <title>Empirical analysis of transcriptional activity in the Arabidopsis genome.</title>
        <authorList>
            <person name="Yamada K."/>
            <person name="Lim J."/>
            <person name="Dale J.M."/>
            <person name="Chen H."/>
            <person name="Shinn P."/>
            <person name="Palm C.J."/>
            <person name="Southwick A.M."/>
            <person name="Wu H.C."/>
            <person name="Kim C.J."/>
            <person name="Nguyen M."/>
            <person name="Pham P.K."/>
            <person name="Cheuk R.F."/>
            <person name="Karlin-Newmann G."/>
            <person name="Liu S.X."/>
            <person name="Lam B."/>
            <person name="Sakano H."/>
            <person name="Wu T."/>
            <person name="Yu G."/>
            <person name="Miranda M."/>
            <person name="Quach H.L."/>
            <person name="Tripp M."/>
            <person name="Chang C.H."/>
            <person name="Lee J.M."/>
            <person name="Toriumi M.J."/>
            <person name="Chan M.M."/>
            <person name="Tang C.C."/>
            <person name="Onodera C.S."/>
            <person name="Deng J.M."/>
            <person name="Akiyama K."/>
            <person name="Ansari Y."/>
            <person name="Arakawa T."/>
            <person name="Banh J."/>
            <person name="Banno F."/>
            <person name="Bowser L."/>
            <person name="Brooks S.Y."/>
            <person name="Carninci P."/>
            <person name="Chao Q."/>
            <person name="Choy N."/>
            <person name="Enju A."/>
            <person name="Goldsmith A.D."/>
            <person name="Gurjal M."/>
            <person name="Hansen N.F."/>
            <person name="Hayashizaki Y."/>
            <person name="Johnson-Hopson C."/>
            <person name="Hsuan V.W."/>
            <person name="Iida K."/>
            <person name="Karnes M."/>
            <person name="Khan S."/>
            <person name="Koesema E."/>
            <person name="Ishida J."/>
            <person name="Jiang P.X."/>
            <person name="Jones T."/>
            <person name="Kawai J."/>
            <person name="Kamiya A."/>
            <person name="Meyers C."/>
            <person name="Nakajima M."/>
            <person name="Narusaka M."/>
            <person name="Seki M."/>
            <person name="Sakurai T."/>
            <person name="Satou M."/>
            <person name="Tamse R."/>
            <person name="Vaysberg M."/>
            <person name="Wallender E.K."/>
            <person name="Wong C."/>
            <person name="Yamamura Y."/>
            <person name="Yuan S."/>
            <person name="Shinozaki K."/>
            <person name="Davis R.W."/>
            <person name="Theologis A."/>
            <person name="Ecker J.R."/>
        </authorList>
    </citation>
    <scope>NUCLEOTIDE SEQUENCE [LARGE SCALE MRNA]</scope>
    <source>
        <strain>cv. Columbia</strain>
    </source>
</reference>
<reference key="4">
    <citation type="journal article" date="2010" name="Plant Mol. Biol.">
        <title>Nuclear targeted AtS40 modulates senescence associated gene expression in Arabidopsis thaliana during natural development and in darkness.</title>
        <authorList>
            <person name="Fischer-Kilbienski I."/>
            <person name="Miao Y."/>
            <person name="Roitsch T."/>
            <person name="Zschiesche W."/>
            <person name="Humbeck K."/>
            <person name="Krupinska K."/>
        </authorList>
    </citation>
    <scope>DEVELOPMENTAL STAGE</scope>
    <scope>INDUCTION BY DARK; ABSCISIC ACID; JASMONIC ACID; SALICYLIC ACID AND PATHOGENS</scope>
    <scope>SUBCELLULAR LOCATION</scope>
    <scope>GENE FAMILY</scope>
    <scope>NOMENCLATURE</scope>
    <source>
        <strain>cv. Columbia</strain>
    </source>
</reference>
<accession>Q9SKN0</accession>
<evidence type="ECO:0000269" key="1">
    <source>
    </source>
</evidence>
<evidence type="ECO:0000303" key="2">
    <source>
    </source>
</evidence>
<evidence type="ECO:0000305" key="3"/>
<evidence type="ECO:0000312" key="4">
    <source>
        <dbReference type="Araport" id="AT2G28400"/>
    </source>
</evidence>
<evidence type="ECO:0000312" key="5">
    <source>
        <dbReference type="EMBL" id="AEC08116.1"/>
    </source>
</evidence>
<organism>
    <name type="scientific">Arabidopsis thaliana</name>
    <name type="common">Mouse-ear cress</name>
    <dbReference type="NCBI Taxonomy" id="3702"/>
    <lineage>
        <taxon>Eukaryota</taxon>
        <taxon>Viridiplantae</taxon>
        <taxon>Streptophyta</taxon>
        <taxon>Embryophyta</taxon>
        <taxon>Tracheophyta</taxon>
        <taxon>Spermatophyta</taxon>
        <taxon>Magnoliopsida</taxon>
        <taxon>eudicotyledons</taxon>
        <taxon>Gunneridae</taxon>
        <taxon>Pentapetalae</taxon>
        <taxon>rosids</taxon>
        <taxon>malvids</taxon>
        <taxon>Brassicales</taxon>
        <taxon>Brassicaceae</taxon>
        <taxon>Camelineae</taxon>
        <taxon>Arabidopsis</taxon>
    </lineage>
</organism>
<name>S404_ARATH</name>
<proteinExistence type="evidence at transcript level"/>
<gene>
    <name evidence="2" type="primary">S40-4</name>
    <name evidence="4" type="ordered locus">At2g28400</name>
    <name evidence="5" type="ORF">T1B3.8</name>
</gene>
<feature type="chain" id="PRO_0000457292" description="Protein S40-4">
    <location>
        <begin position="1"/>
        <end position="162"/>
    </location>
</feature>